<reference key="1">
    <citation type="journal article" date="2005" name="Science">
        <title>The transcriptional landscape of the mammalian genome.</title>
        <authorList>
            <person name="Carninci P."/>
            <person name="Kasukawa T."/>
            <person name="Katayama S."/>
            <person name="Gough J."/>
            <person name="Frith M.C."/>
            <person name="Maeda N."/>
            <person name="Oyama R."/>
            <person name="Ravasi T."/>
            <person name="Lenhard B."/>
            <person name="Wells C."/>
            <person name="Kodzius R."/>
            <person name="Shimokawa K."/>
            <person name="Bajic V.B."/>
            <person name="Brenner S.E."/>
            <person name="Batalov S."/>
            <person name="Forrest A.R."/>
            <person name="Zavolan M."/>
            <person name="Davis M.J."/>
            <person name="Wilming L.G."/>
            <person name="Aidinis V."/>
            <person name="Allen J.E."/>
            <person name="Ambesi-Impiombato A."/>
            <person name="Apweiler R."/>
            <person name="Aturaliya R.N."/>
            <person name="Bailey T.L."/>
            <person name="Bansal M."/>
            <person name="Baxter L."/>
            <person name="Beisel K.W."/>
            <person name="Bersano T."/>
            <person name="Bono H."/>
            <person name="Chalk A.M."/>
            <person name="Chiu K.P."/>
            <person name="Choudhary V."/>
            <person name="Christoffels A."/>
            <person name="Clutterbuck D.R."/>
            <person name="Crowe M.L."/>
            <person name="Dalla E."/>
            <person name="Dalrymple B.P."/>
            <person name="de Bono B."/>
            <person name="Della Gatta G."/>
            <person name="di Bernardo D."/>
            <person name="Down T."/>
            <person name="Engstrom P."/>
            <person name="Fagiolini M."/>
            <person name="Faulkner G."/>
            <person name="Fletcher C.F."/>
            <person name="Fukushima T."/>
            <person name="Furuno M."/>
            <person name="Futaki S."/>
            <person name="Gariboldi M."/>
            <person name="Georgii-Hemming P."/>
            <person name="Gingeras T.R."/>
            <person name="Gojobori T."/>
            <person name="Green R.E."/>
            <person name="Gustincich S."/>
            <person name="Harbers M."/>
            <person name="Hayashi Y."/>
            <person name="Hensch T.K."/>
            <person name="Hirokawa N."/>
            <person name="Hill D."/>
            <person name="Huminiecki L."/>
            <person name="Iacono M."/>
            <person name="Ikeo K."/>
            <person name="Iwama A."/>
            <person name="Ishikawa T."/>
            <person name="Jakt M."/>
            <person name="Kanapin A."/>
            <person name="Katoh M."/>
            <person name="Kawasawa Y."/>
            <person name="Kelso J."/>
            <person name="Kitamura H."/>
            <person name="Kitano H."/>
            <person name="Kollias G."/>
            <person name="Krishnan S.P."/>
            <person name="Kruger A."/>
            <person name="Kummerfeld S.K."/>
            <person name="Kurochkin I.V."/>
            <person name="Lareau L.F."/>
            <person name="Lazarevic D."/>
            <person name="Lipovich L."/>
            <person name="Liu J."/>
            <person name="Liuni S."/>
            <person name="McWilliam S."/>
            <person name="Madan Babu M."/>
            <person name="Madera M."/>
            <person name="Marchionni L."/>
            <person name="Matsuda H."/>
            <person name="Matsuzawa S."/>
            <person name="Miki H."/>
            <person name="Mignone F."/>
            <person name="Miyake S."/>
            <person name="Morris K."/>
            <person name="Mottagui-Tabar S."/>
            <person name="Mulder N."/>
            <person name="Nakano N."/>
            <person name="Nakauchi H."/>
            <person name="Ng P."/>
            <person name="Nilsson R."/>
            <person name="Nishiguchi S."/>
            <person name="Nishikawa S."/>
            <person name="Nori F."/>
            <person name="Ohara O."/>
            <person name="Okazaki Y."/>
            <person name="Orlando V."/>
            <person name="Pang K.C."/>
            <person name="Pavan W.J."/>
            <person name="Pavesi G."/>
            <person name="Pesole G."/>
            <person name="Petrovsky N."/>
            <person name="Piazza S."/>
            <person name="Reed J."/>
            <person name="Reid J.F."/>
            <person name="Ring B.Z."/>
            <person name="Ringwald M."/>
            <person name="Rost B."/>
            <person name="Ruan Y."/>
            <person name="Salzberg S.L."/>
            <person name="Sandelin A."/>
            <person name="Schneider C."/>
            <person name="Schoenbach C."/>
            <person name="Sekiguchi K."/>
            <person name="Semple C.A."/>
            <person name="Seno S."/>
            <person name="Sessa L."/>
            <person name="Sheng Y."/>
            <person name="Shibata Y."/>
            <person name="Shimada H."/>
            <person name="Shimada K."/>
            <person name="Silva D."/>
            <person name="Sinclair B."/>
            <person name="Sperling S."/>
            <person name="Stupka E."/>
            <person name="Sugiura K."/>
            <person name="Sultana R."/>
            <person name="Takenaka Y."/>
            <person name="Taki K."/>
            <person name="Tammoja K."/>
            <person name="Tan S.L."/>
            <person name="Tang S."/>
            <person name="Taylor M.S."/>
            <person name="Tegner J."/>
            <person name="Teichmann S.A."/>
            <person name="Ueda H.R."/>
            <person name="van Nimwegen E."/>
            <person name="Verardo R."/>
            <person name="Wei C.L."/>
            <person name="Yagi K."/>
            <person name="Yamanishi H."/>
            <person name="Zabarovsky E."/>
            <person name="Zhu S."/>
            <person name="Zimmer A."/>
            <person name="Hide W."/>
            <person name="Bult C."/>
            <person name="Grimmond S.M."/>
            <person name="Teasdale R.D."/>
            <person name="Liu E.T."/>
            <person name="Brusic V."/>
            <person name="Quackenbush J."/>
            <person name="Wahlestedt C."/>
            <person name="Mattick J.S."/>
            <person name="Hume D.A."/>
            <person name="Kai C."/>
            <person name="Sasaki D."/>
            <person name="Tomaru Y."/>
            <person name="Fukuda S."/>
            <person name="Kanamori-Katayama M."/>
            <person name="Suzuki M."/>
            <person name="Aoki J."/>
            <person name="Arakawa T."/>
            <person name="Iida J."/>
            <person name="Imamura K."/>
            <person name="Itoh M."/>
            <person name="Kato T."/>
            <person name="Kawaji H."/>
            <person name="Kawagashira N."/>
            <person name="Kawashima T."/>
            <person name="Kojima M."/>
            <person name="Kondo S."/>
            <person name="Konno H."/>
            <person name="Nakano K."/>
            <person name="Ninomiya N."/>
            <person name="Nishio T."/>
            <person name="Okada M."/>
            <person name="Plessy C."/>
            <person name="Shibata K."/>
            <person name="Shiraki T."/>
            <person name="Suzuki S."/>
            <person name="Tagami M."/>
            <person name="Waki K."/>
            <person name="Watahiki A."/>
            <person name="Okamura-Oho Y."/>
            <person name="Suzuki H."/>
            <person name="Kawai J."/>
            <person name="Hayashizaki Y."/>
        </authorList>
    </citation>
    <scope>NUCLEOTIDE SEQUENCE [LARGE SCALE MRNA]</scope>
    <source>
        <strain>C57BL/6J</strain>
        <strain>NOD</strain>
        <tissue>Thymus</tissue>
    </source>
</reference>
<reference key="2">
    <citation type="journal article" date="2004" name="Genome Res.">
        <title>The status, quality, and expansion of the NIH full-length cDNA project: the Mammalian Gene Collection (MGC).</title>
        <authorList>
            <consortium name="The MGC Project Team"/>
        </authorList>
    </citation>
    <scope>NUCLEOTIDE SEQUENCE [LARGE SCALE MRNA]</scope>
    <source>
        <tissue>Brain</tissue>
    </source>
</reference>
<reference key="3">
    <citation type="journal article" date="2010" name="Cell">
        <title>A tissue-specific atlas of mouse protein phosphorylation and expression.</title>
        <authorList>
            <person name="Huttlin E.L."/>
            <person name="Jedrychowski M.P."/>
            <person name="Elias J.E."/>
            <person name="Goswami T."/>
            <person name="Rad R."/>
            <person name="Beausoleil S.A."/>
            <person name="Villen J."/>
            <person name="Haas W."/>
            <person name="Sowa M.E."/>
            <person name="Gygi S.P."/>
        </authorList>
    </citation>
    <scope>IDENTIFICATION BY MASS SPECTROMETRY [LARGE SCALE ANALYSIS]</scope>
    <source>
        <tissue>Brain</tissue>
        <tissue>Heart</tissue>
        <tissue>Kidney</tissue>
        <tissue>Liver</tissue>
        <tissue>Lung</tissue>
        <tissue>Pancreas</tissue>
        <tissue>Spleen</tissue>
        <tissue>Testis</tissue>
    </source>
</reference>
<reference key="4">
    <citation type="journal article" date="2011" name="Cell">
        <title>The RNA exosome targets the AID cytidine deaminase to both strands of transcribed duplex DNA substrates.</title>
        <authorList>
            <person name="Basu U."/>
            <person name="Meng F.L."/>
            <person name="Keim C."/>
            <person name="Grinstein V."/>
            <person name="Pefanis E."/>
            <person name="Eccleston J."/>
            <person name="Zhang T."/>
            <person name="Myers D."/>
            <person name="Wasserman C.R."/>
            <person name="Wesemann D.R."/>
            <person name="Januszyk K."/>
            <person name="Gregory R.I."/>
            <person name="Deng H."/>
            <person name="Lima C.D."/>
            <person name="Alt F.W."/>
        </authorList>
    </citation>
    <scope>FUNCTION IN IG CLASS-SWITCH RECOMBINATION</scope>
</reference>
<evidence type="ECO:0000250" key="1"/>
<evidence type="ECO:0000250" key="2">
    <source>
        <dbReference type="UniProtKB" id="Q5RKV6"/>
    </source>
</evidence>
<evidence type="ECO:0000256" key="3">
    <source>
        <dbReference type="SAM" id="MobiDB-lite"/>
    </source>
</evidence>
<evidence type="ECO:0000269" key="4">
    <source>
    </source>
</evidence>
<evidence type="ECO:0000305" key="5"/>
<name>EXOS6_MOUSE</name>
<proteinExistence type="evidence at protein level"/>
<feature type="chain" id="PRO_0000287479" description="Exosome complex component MTR3">
    <location>
        <begin position="1"/>
        <end position="273"/>
    </location>
</feature>
<feature type="region of interest" description="Disordered" evidence="3">
    <location>
        <begin position="1"/>
        <end position="36"/>
    </location>
</feature>
<accession>Q8BTW3</accession>
<accession>Q9CSR7</accession>
<organism>
    <name type="scientific">Mus musculus</name>
    <name type="common">Mouse</name>
    <dbReference type="NCBI Taxonomy" id="10090"/>
    <lineage>
        <taxon>Eukaryota</taxon>
        <taxon>Metazoa</taxon>
        <taxon>Chordata</taxon>
        <taxon>Craniata</taxon>
        <taxon>Vertebrata</taxon>
        <taxon>Euteleostomi</taxon>
        <taxon>Mammalia</taxon>
        <taxon>Eutheria</taxon>
        <taxon>Euarchontoglires</taxon>
        <taxon>Glires</taxon>
        <taxon>Rodentia</taxon>
        <taxon>Myomorpha</taxon>
        <taxon>Muroidea</taxon>
        <taxon>Muridae</taxon>
        <taxon>Murinae</taxon>
        <taxon>Mus</taxon>
        <taxon>Mus</taxon>
    </lineage>
</organism>
<dbReference type="EMBL" id="AK012102">
    <property type="protein sequence ID" value="BAB28033.1"/>
    <property type="status" value="ALT_FRAME"/>
    <property type="molecule type" value="mRNA"/>
</dbReference>
<dbReference type="EMBL" id="AK088532">
    <property type="protein sequence ID" value="BAC40407.1"/>
    <property type="molecule type" value="mRNA"/>
</dbReference>
<dbReference type="EMBL" id="BC116985">
    <property type="protein sequence ID" value="AAI16986.1"/>
    <property type="molecule type" value="mRNA"/>
</dbReference>
<dbReference type="EMBL" id="BC119082">
    <property type="protein sequence ID" value="AAI19083.1"/>
    <property type="molecule type" value="mRNA"/>
</dbReference>
<dbReference type="CCDS" id="CCDS85611.1"/>
<dbReference type="RefSeq" id="NP_082550.1">
    <property type="nucleotide sequence ID" value="NM_028274.4"/>
</dbReference>
<dbReference type="SMR" id="Q8BTW3"/>
<dbReference type="BioGRID" id="215428">
    <property type="interactions" value="6"/>
</dbReference>
<dbReference type="ComplexPortal" id="CPX-594">
    <property type="entry name" value="Nuclear exosome complex, Dis3-Exosc10 variant"/>
</dbReference>
<dbReference type="ComplexPortal" id="CPX-595">
    <property type="entry name" value="Nucleolar exosome complex, Exosc10 variant"/>
</dbReference>
<dbReference type="ComplexPortal" id="CPX-596">
    <property type="entry name" value="Cytoplasmic exosome complex, Dis3l variant"/>
</dbReference>
<dbReference type="ComplexPortal" id="CPX-598">
    <property type="entry name" value="Exosome complex, Dis3 variant"/>
</dbReference>
<dbReference type="ComplexPortal" id="CPX-601">
    <property type="entry name" value="Cytoplasmic exosome complex, Dis3l-Exosc10 variant"/>
</dbReference>
<dbReference type="FunCoup" id="Q8BTW3">
    <property type="interactions" value="1057"/>
</dbReference>
<dbReference type="IntAct" id="Q8BTW3">
    <property type="interactions" value="4"/>
</dbReference>
<dbReference type="MINT" id="Q8BTW3"/>
<dbReference type="STRING" id="10090.ENSMUSP00000147696"/>
<dbReference type="PhosphoSitePlus" id="Q8BTW3"/>
<dbReference type="SwissPalm" id="Q8BTW3"/>
<dbReference type="PeptideAtlas" id="Q8BTW3"/>
<dbReference type="ProteomicsDB" id="275792"/>
<dbReference type="Pumba" id="Q8BTW3"/>
<dbReference type="Antibodypedia" id="29956">
    <property type="antibodies" value="90 antibodies from 15 providers"/>
</dbReference>
<dbReference type="DNASU" id="72544"/>
<dbReference type="Ensembl" id="ENSMUST00000210390.2">
    <property type="protein sequence ID" value="ENSMUSP00000147696.2"/>
    <property type="gene ID" value="ENSMUSG00000109941.2"/>
</dbReference>
<dbReference type="GeneID" id="72544"/>
<dbReference type="KEGG" id="mmu:72544"/>
<dbReference type="UCSC" id="uc009nlp.2">
    <property type="organism name" value="mouse"/>
</dbReference>
<dbReference type="AGR" id="MGI:1919794"/>
<dbReference type="CTD" id="118460"/>
<dbReference type="MGI" id="MGI:1919794">
    <property type="gene designation" value="Exosc6"/>
</dbReference>
<dbReference type="VEuPathDB" id="HostDB:ENSMUSG00000109941"/>
<dbReference type="GeneTree" id="ENSGT00940000153348"/>
<dbReference type="InParanoid" id="Q8BTW3"/>
<dbReference type="OMA" id="MCCVYGP"/>
<dbReference type="OrthoDB" id="2504340at2759"/>
<dbReference type="PhylomeDB" id="Q8BTW3"/>
<dbReference type="BRENDA" id="1.8.1.9">
    <property type="organism ID" value="3474"/>
</dbReference>
<dbReference type="Reactome" id="R-MMU-429958">
    <property type="pathway name" value="mRNA decay by 3' to 5' exoribonuclease"/>
</dbReference>
<dbReference type="Reactome" id="R-MMU-450385">
    <property type="pathway name" value="Butyrate Response Factor 1 (BRF1) binds and destabilizes mRNA"/>
</dbReference>
<dbReference type="Reactome" id="R-MMU-450513">
    <property type="pathway name" value="Tristetraprolin (TTP, ZFP36) binds and destabilizes mRNA"/>
</dbReference>
<dbReference type="Reactome" id="R-MMU-450604">
    <property type="pathway name" value="KSRP (KHSRP) binds and destabilizes mRNA"/>
</dbReference>
<dbReference type="Reactome" id="R-MMU-6791226">
    <property type="pathway name" value="Major pathway of rRNA processing in the nucleolus and cytosol"/>
</dbReference>
<dbReference type="BioGRID-ORCS" id="72544">
    <property type="hits" value="8 hits in 54 CRISPR screens"/>
</dbReference>
<dbReference type="ChiTaRS" id="Exosc6">
    <property type="organism name" value="mouse"/>
</dbReference>
<dbReference type="PRO" id="PR:Q8BTW3"/>
<dbReference type="Proteomes" id="UP000000589">
    <property type="component" value="Chromosome 8"/>
</dbReference>
<dbReference type="RNAct" id="Q8BTW3">
    <property type="molecule type" value="protein"/>
</dbReference>
<dbReference type="Bgee" id="ENSMUSG00000109941">
    <property type="expression patterns" value="Expressed in mesodermal cell in embryo and 50 other cell types or tissues"/>
</dbReference>
<dbReference type="GO" id="GO:0000177">
    <property type="term" value="C:cytoplasmic exosome (RNase complex)"/>
    <property type="evidence" value="ECO:0000303"/>
    <property type="project" value="ComplexPortal"/>
</dbReference>
<dbReference type="GO" id="GO:0005829">
    <property type="term" value="C:cytosol"/>
    <property type="evidence" value="ECO:0000266"/>
    <property type="project" value="ComplexPortal"/>
</dbReference>
<dbReference type="GO" id="GO:0000178">
    <property type="term" value="C:exosome (RNase complex)"/>
    <property type="evidence" value="ECO:0000250"/>
    <property type="project" value="UniProtKB"/>
</dbReference>
<dbReference type="GO" id="GO:0000176">
    <property type="term" value="C:nuclear exosome (RNase complex)"/>
    <property type="evidence" value="ECO:0000303"/>
    <property type="project" value="ComplexPortal"/>
</dbReference>
<dbReference type="GO" id="GO:0101019">
    <property type="term" value="C:nucleolar exosome (RNase complex)"/>
    <property type="evidence" value="ECO:0000303"/>
    <property type="project" value="ComplexPortal"/>
</dbReference>
<dbReference type="GO" id="GO:0005730">
    <property type="term" value="C:nucleolus"/>
    <property type="evidence" value="ECO:0000266"/>
    <property type="project" value="ComplexPortal"/>
</dbReference>
<dbReference type="GO" id="GO:0005634">
    <property type="term" value="C:nucleus"/>
    <property type="evidence" value="ECO:0000266"/>
    <property type="project" value="ComplexPortal"/>
</dbReference>
<dbReference type="GO" id="GO:0003723">
    <property type="term" value="F:RNA binding"/>
    <property type="evidence" value="ECO:0007669"/>
    <property type="project" value="UniProtKB-KW"/>
</dbReference>
<dbReference type="GO" id="GO:0045006">
    <property type="term" value="P:DNA deamination"/>
    <property type="evidence" value="ECO:0007669"/>
    <property type="project" value="Ensembl"/>
</dbReference>
<dbReference type="GO" id="GO:0045190">
    <property type="term" value="P:isotype switching"/>
    <property type="evidence" value="ECO:0000315"/>
    <property type="project" value="UniProtKB"/>
</dbReference>
<dbReference type="GO" id="GO:0045830">
    <property type="term" value="P:positive regulation of isotype switching"/>
    <property type="evidence" value="ECO:0000315"/>
    <property type="project" value="MGI"/>
</dbReference>
<dbReference type="GO" id="GO:0006401">
    <property type="term" value="P:RNA catabolic process"/>
    <property type="evidence" value="ECO:0000266"/>
    <property type="project" value="ComplexPortal"/>
</dbReference>
<dbReference type="GO" id="GO:0006396">
    <property type="term" value="P:RNA processing"/>
    <property type="evidence" value="ECO:0000266"/>
    <property type="project" value="ComplexPortal"/>
</dbReference>
<dbReference type="GO" id="GO:0006364">
    <property type="term" value="P:rRNA processing"/>
    <property type="evidence" value="ECO:0007669"/>
    <property type="project" value="UniProtKB-KW"/>
</dbReference>
<dbReference type="CDD" id="cd11371">
    <property type="entry name" value="RNase_PH_MTR3"/>
    <property type="match status" value="1"/>
</dbReference>
<dbReference type="FunFam" id="3.30.230.70:FF:000023">
    <property type="entry name" value="exosome complex component MTR3"/>
    <property type="match status" value="1"/>
</dbReference>
<dbReference type="Gene3D" id="3.30.230.70">
    <property type="entry name" value="GHMP Kinase, N-terminal domain"/>
    <property type="match status" value="1"/>
</dbReference>
<dbReference type="InterPro" id="IPR001247">
    <property type="entry name" value="ExoRNase_PH_dom1"/>
</dbReference>
<dbReference type="InterPro" id="IPR036345">
    <property type="entry name" value="ExoRNase_PH_dom2_sf"/>
</dbReference>
<dbReference type="InterPro" id="IPR027408">
    <property type="entry name" value="PNPase/RNase_PH_dom_sf"/>
</dbReference>
<dbReference type="InterPro" id="IPR020568">
    <property type="entry name" value="Ribosomal_Su5_D2-typ_SF"/>
</dbReference>
<dbReference type="InterPro" id="IPR050080">
    <property type="entry name" value="RNase_PH"/>
</dbReference>
<dbReference type="PANTHER" id="PTHR11953">
    <property type="entry name" value="EXOSOME COMPLEX COMPONENT"/>
    <property type="match status" value="1"/>
</dbReference>
<dbReference type="PANTHER" id="PTHR11953:SF2">
    <property type="entry name" value="EXOSOME COMPLEX COMPONENT MTR3"/>
    <property type="match status" value="1"/>
</dbReference>
<dbReference type="Pfam" id="PF01138">
    <property type="entry name" value="RNase_PH"/>
    <property type="match status" value="1"/>
</dbReference>
<dbReference type="SUPFAM" id="SSF55666">
    <property type="entry name" value="Ribonuclease PH domain 2-like"/>
    <property type="match status" value="1"/>
</dbReference>
<dbReference type="SUPFAM" id="SSF54211">
    <property type="entry name" value="Ribosomal protein S5 domain 2-like"/>
    <property type="match status" value="1"/>
</dbReference>
<protein>
    <recommendedName>
        <fullName>Exosome complex component MTR3</fullName>
    </recommendedName>
    <alternativeName>
        <fullName>Exosome component 6</fullName>
    </alternativeName>
    <alternativeName>
        <fullName>mRNA transport regulator 3 homolog</fullName>
    </alternativeName>
</protein>
<gene>
    <name type="primary">Exosc6</name>
    <name type="synonym">Mtr3</name>
</gene>
<keyword id="KW-0963">Cytoplasm</keyword>
<keyword id="KW-0271">Exosome</keyword>
<keyword id="KW-0539">Nucleus</keyword>
<keyword id="KW-1185">Reference proteome</keyword>
<keyword id="KW-0694">RNA-binding</keyword>
<keyword id="KW-0698">rRNA processing</keyword>
<comment type="function">
    <text evidence="2 4">Non-catalytic component of the RNA exosome complex which has 3'-&gt;5' exoribonuclease activity and participates in a multitude of cellular RNA processing and degradation events. In the nucleus, the RNA exosome complex is involved in proper maturation of stable RNA species such as rRNA, snRNA and snoRNA, in the elimination of RNA processing by-products and non-coding 'pervasive' transcripts, such as antisense RNA species and promoter-upstream transcripts (PROMPTs), and of mRNAs with processing defects, thereby limiting or excluding their export to the cytoplasm. The RNA exosome may be involved in Ig class switch recombination (CSR) and/or Ig variable region somatic hypermutation (SHM) by targeting AICDA deamination activity to transcribed dsDNA substrates. In the cytoplasm, the RNA exosome complex is involved in general mRNA turnover and specifically degrades inherently unstable mRNAs containing AU-rich elements (AREs) within their 3' untranslated regions, and in RNA surveillance pathways, preventing translation of aberrant mRNAs. It seems to be involved in degradation of histone mRNA. The catalytic inactive RNA exosome core complex of 9 subunits (Exo-9) is proposed to play a pivotal role in the binding and presentation of RNA for ribonucleolysis, and to serve as a scaffold for the association with catalytic subunits and accessory proteins or complexes (By similarity).</text>
</comment>
<comment type="subunit">
    <text evidence="2">Component of the RNA exosome core complex (Exo-9), composed of EXOSC1, EXOSC2, EXOSC3, EXOSC4, EXOSC5, EXOSC6, EXOSC7, EXOSC8 and EXOSC9; within the complex interacts with EXOSC1, EXOSC7 and EXOSC8 (By similarity). The catalytically inactive RNA exosome core complex (Exo-9) associates with the catalytic subunit EXOSC10/RRP6 (By similarity). Exo-9 may associate with DIS3 to form the nucleolar exosome complex, or DIS3L to form the cytoplasmic exosome complex (By similarity). Exo-9 is formed by a hexameric base ring consisting of the heterodimers EXOSC4-EXOSC9, EXOSC5-EXOSC8 and EXOSC6-EXOSC7, and a cap ring consisting of EXOSC1, EXOSC2 and EXOSC3 (By similarity). The RNA exosome complex associates with cofactors EXOSC10/RRP6, C1D/RRP47, MPHOSPH6/MPP6 and MTREX/MTR4 (By similarity).</text>
</comment>
<comment type="subcellular location">
    <subcellularLocation>
        <location evidence="1">Cytoplasm</location>
    </subcellularLocation>
    <subcellularLocation>
        <location evidence="1">Nucleus</location>
        <location evidence="1">Nucleolus</location>
    </subcellularLocation>
    <subcellularLocation>
        <location evidence="1">Nucleus</location>
    </subcellularLocation>
</comment>
<comment type="similarity">
    <text evidence="5">Belongs to the RNase PH family.</text>
</comment>
<comment type="sequence caution" evidence="5">
    <conflict type="frameshift">
        <sequence resource="EMBL-CDS" id="BAB28033"/>
    </conflict>
</comment>
<sequence length="273" mass="28370">MPGDHRRIRGPEESQPPQLYAAEDDETPAARDPTRLRPVYARAGLLSQAKGSAYLEAGGTKVLCAVSGPRQAEGGERGSGPAGAGGEAPAALRGRLLCDFRRAPFSGRRRRAPQGGGGEDRELGLALQEALEPAVRLGRYPRAQLEVSALLLEDGGCALAAALTAAALALADAGVEMYDLVVGCGLSLTPGPSPTWLLDPTRLEEEHSAAGLTVALMPVLNQVAGLLGSGEGGQTESWTDAVRLGLEGCQRLYPVLQQCLVRAARRRGAAAPP</sequence>